<feature type="chain" id="PRO_0000060358" description="tRNA (guanine-N(1)-)-methyltransferase">
    <location>
        <begin position="1"/>
        <end position="230"/>
    </location>
</feature>
<feature type="binding site" evidence="1">
    <location>
        <position position="112"/>
    </location>
    <ligand>
        <name>S-adenosyl-L-methionine</name>
        <dbReference type="ChEBI" id="CHEBI:59789"/>
    </ligand>
</feature>
<proteinExistence type="inferred from homology"/>
<gene>
    <name type="primary">trmD</name>
    <name type="ordered locus">CT1164</name>
</gene>
<accession>Q8KD90</accession>
<comment type="function">
    <text evidence="1">Specifically methylates guanosine-37 in various tRNAs.</text>
</comment>
<comment type="catalytic activity">
    <reaction>
        <text>guanosine(37) in tRNA + S-adenosyl-L-methionine = N(1)-methylguanosine(37) in tRNA + S-adenosyl-L-homocysteine + H(+)</text>
        <dbReference type="Rhea" id="RHEA:36899"/>
        <dbReference type="Rhea" id="RHEA-COMP:10145"/>
        <dbReference type="Rhea" id="RHEA-COMP:10147"/>
        <dbReference type="ChEBI" id="CHEBI:15378"/>
        <dbReference type="ChEBI" id="CHEBI:57856"/>
        <dbReference type="ChEBI" id="CHEBI:59789"/>
        <dbReference type="ChEBI" id="CHEBI:73542"/>
        <dbReference type="ChEBI" id="CHEBI:74269"/>
        <dbReference type="EC" id="2.1.1.228"/>
    </reaction>
</comment>
<comment type="subunit">
    <text evidence="1">Homodimer.</text>
</comment>
<comment type="subcellular location">
    <subcellularLocation>
        <location evidence="2">Cytoplasm</location>
    </subcellularLocation>
</comment>
<comment type="similarity">
    <text evidence="2">Belongs to the RNA methyltransferase TrmD family.</text>
</comment>
<keyword id="KW-0963">Cytoplasm</keyword>
<keyword id="KW-0489">Methyltransferase</keyword>
<keyword id="KW-1185">Reference proteome</keyword>
<keyword id="KW-0949">S-adenosyl-L-methionine</keyword>
<keyword id="KW-0808">Transferase</keyword>
<keyword id="KW-0819">tRNA processing</keyword>
<reference key="1">
    <citation type="journal article" date="2002" name="Proc. Natl. Acad. Sci. U.S.A.">
        <title>The complete genome sequence of Chlorobium tepidum TLS, a photosynthetic, anaerobic, green-sulfur bacterium.</title>
        <authorList>
            <person name="Eisen J.A."/>
            <person name="Nelson K.E."/>
            <person name="Paulsen I.T."/>
            <person name="Heidelberg J.F."/>
            <person name="Wu M."/>
            <person name="Dodson R.J."/>
            <person name="DeBoy R.T."/>
            <person name="Gwinn M.L."/>
            <person name="Nelson W.C."/>
            <person name="Haft D.H."/>
            <person name="Hickey E.K."/>
            <person name="Peterson J.D."/>
            <person name="Durkin A.S."/>
            <person name="Kolonay J.F."/>
            <person name="Yang F."/>
            <person name="Holt I.E."/>
            <person name="Umayam L.A."/>
            <person name="Mason T.M."/>
            <person name="Brenner M."/>
            <person name="Shea T.P."/>
            <person name="Parksey D.S."/>
            <person name="Nierman W.C."/>
            <person name="Feldblyum T.V."/>
            <person name="Hansen C.L."/>
            <person name="Craven M.B."/>
            <person name="Radune D."/>
            <person name="Vamathevan J.J."/>
            <person name="Khouri H.M."/>
            <person name="White O."/>
            <person name="Gruber T.M."/>
            <person name="Ketchum K.A."/>
            <person name="Venter J.C."/>
            <person name="Tettelin H."/>
            <person name="Bryant D.A."/>
            <person name="Fraser C.M."/>
        </authorList>
    </citation>
    <scope>NUCLEOTIDE SEQUENCE [LARGE SCALE GENOMIC DNA]</scope>
    <source>
        <strain>ATCC 49652 / DSM 12025 / NBRC 103806 / TLS</strain>
    </source>
</reference>
<name>TRMD_CHLTE</name>
<sequence>MRIEIISVIPDFFASPLEKGLLGIARRKGLAEIHVHNLHDYGLGKYQQVDDAPFGGGAGMVIRPEPVFACIEKLQAERSYDEVIFMTPDGQAFDQKRANRLSRKGNLIILCGHYKAIDERIRRTLVTMELSVGDVVLSGGEIPALMVMDAVLRLIPGVLGDGESALTDSFQNELLDCAWYTRPAEFRGMKVPDVLLSGHHEKIELWRQENARERTLERRPEMLGKESEKE</sequence>
<dbReference type="EC" id="2.1.1.228"/>
<dbReference type="EMBL" id="AE006470">
    <property type="protein sequence ID" value="AAM72397.1"/>
    <property type="molecule type" value="Genomic_DNA"/>
</dbReference>
<dbReference type="RefSeq" id="NP_662055.1">
    <property type="nucleotide sequence ID" value="NC_002932.3"/>
</dbReference>
<dbReference type="RefSeq" id="WP_010932836.1">
    <property type="nucleotide sequence ID" value="NC_002932.3"/>
</dbReference>
<dbReference type="SMR" id="Q8KD90"/>
<dbReference type="STRING" id="194439.CT1164"/>
<dbReference type="EnsemblBacteria" id="AAM72397">
    <property type="protein sequence ID" value="AAM72397"/>
    <property type="gene ID" value="CT1164"/>
</dbReference>
<dbReference type="KEGG" id="cte:CT1164"/>
<dbReference type="PATRIC" id="fig|194439.7.peg.1059"/>
<dbReference type="eggNOG" id="COG0336">
    <property type="taxonomic scope" value="Bacteria"/>
</dbReference>
<dbReference type="HOGENOM" id="CLU_047363_0_1_10"/>
<dbReference type="OrthoDB" id="9807416at2"/>
<dbReference type="Proteomes" id="UP000001007">
    <property type="component" value="Chromosome"/>
</dbReference>
<dbReference type="GO" id="GO:0005829">
    <property type="term" value="C:cytosol"/>
    <property type="evidence" value="ECO:0007669"/>
    <property type="project" value="TreeGrafter"/>
</dbReference>
<dbReference type="GO" id="GO:0052906">
    <property type="term" value="F:tRNA (guanine(37)-N1)-methyltransferase activity"/>
    <property type="evidence" value="ECO:0007669"/>
    <property type="project" value="UniProtKB-UniRule"/>
</dbReference>
<dbReference type="GO" id="GO:0002939">
    <property type="term" value="P:tRNA N1-guanine methylation"/>
    <property type="evidence" value="ECO:0007669"/>
    <property type="project" value="TreeGrafter"/>
</dbReference>
<dbReference type="CDD" id="cd18080">
    <property type="entry name" value="TrmD-like"/>
    <property type="match status" value="1"/>
</dbReference>
<dbReference type="FunFam" id="3.40.1280.10:FF:000001">
    <property type="entry name" value="tRNA (guanine-N(1)-)-methyltransferase"/>
    <property type="match status" value="1"/>
</dbReference>
<dbReference type="Gene3D" id="3.40.1280.10">
    <property type="match status" value="1"/>
</dbReference>
<dbReference type="Gene3D" id="1.10.1270.20">
    <property type="entry name" value="tRNA(m1g37)methyltransferase, domain 2"/>
    <property type="match status" value="1"/>
</dbReference>
<dbReference type="HAMAP" id="MF_00605">
    <property type="entry name" value="TrmD"/>
    <property type="match status" value="1"/>
</dbReference>
<dbReference type="InterPro" id="IPR029028">
    <property type="entry name" value="Alpha/beta_knot_MTases"/>
</dbReference>
<dbReference type="InterPro" id="IPR023148">
    <property type="entry name" value="tRNA_m1G_MeTrfase_C_sf"/>
</dbReference>
<dbReference type="InterPro" id="IPR002649">
    <property type="entry name" value="tRNA_m1G_MeTrfase_TrmD"/>
</dbReference>
<dbReference type="InterPro" id="IPR029026">
    <property type="entry name" value="tRNA_m1G_MTases_N"/>
</dbReference>
<dbReference type="InterPro" id="IPR016009">
    <property type="entry name" value="tRNA_MeTrfase_TRMD/TRM10"/>
</dbReference>
<dbReference type="NCBIfam" id="NF000648">
    <property type="entry name" value="PRK00026.1"/>
    <property type="match status" value="1"/>
</dbReference>
<dbReference type="NCBIfam" id="TIGR00088">
    <property type="entry name" value="trmD"/>
    <property type="match status" value="1"/>
</dbReference>
<dbReference type="PANTHER" id="PTHR46417">
    <property type="entry name" value="TRNA (GUANINE-N(1)-)-METHYLTRANSFERASE"/>
    <property type="match status" value="1"/>
</dbReference>
<dbReference type="PANTHER" id="PTHR46417:SF1">
    <property type="entry name" value="TRNA (GUANINE-N(1)-)-METHYLTRANSFERASE"/>
    <property type="match status" value="1"/>
</dbReference>
<dbReference type="Pfam" id="PF01746">
    <property type="entry name" value="tRNA_m1G_MT"/>
    <property type="match status" value="1"/>
</dbReference>
<dbReference type="PIRSF" id="PIRSF000386">
    <property type="entry name" value="tRNA_mtase"/>
    <property type="match status" value="1"/>
</dbReference>
<dbReference type="SUPFAM" id="SSF75217">
    <property type="entry name" value="alpha/beta knot"/>
    <property type="match status" value="1"/>
</dbReference>
<evidence type="ECO:0000250" key="1"/>
<evidence type="ECO:0000305" key="2"/>
<protein>
    <recommendedName>
        <fullName>tRNA (guanine-N(1)-)-methyltransferase</fullName>
        <ecNumber>2.1.1.228</ecNumber>
    </recommendedName>
    <alternativeName>
        <fullName>M1G-methyltransferase</fullName>
    </alternativeName>
    <alternativeName>
        <fullName>tRNA [GM37] methyltransferase</fullName>
    </alternativeName>
</protein>
<organism>
    <name type="scientific">Chlorobaculum tepidum (strain ATCC 49652 / DSM 12025 / NBRC 103806 / TLS)</name>
    <name type="common">Chlorobium tepidum</name>
    <dbReference type="NCBI Taxonomy" id="194439"/>
    <lineage>
        <taxon>Bacteria</taxon>
        <taxon>Pseudomonadati</taxon>
        <taxon>Chlorobiota</taxon>
        <taxon>Chlorobiia</taxon>
        <taxon>Chlorobiales</taxon>
        <taxon>Chlorobiaceae</taxon>
        <taxon>Chlorobaculum</taxon>
    </lineage>
</organism>